<evidence type="ECO:0000255" key="1">
    <source>
        <dbReference type="HAMAP-Rule" id="MF_00054"/>
    </source>
</evidence>
<gene>
    <name evidence="1" type="primary">fusA</name>
    <name type="ordered locus">IL0349</name>
</gene>
<organism>
    <name type="scientific">Idiomarina loihiensis (strain ATCC BAA-735 / DSM 15497 / L2-TR)</name>
    <dbReference type="NCBI Taxonomy" id="283942"/>
    <lineage>
        <taxon>Bacteria</taxon>
        <taxon>Pseudomonadati</taxon>
        <taxon>Pseudomonadota</taxon>
        <taxon>Gammaproteobacteria</taxon>
        <taxon>Alteromonadales</taxon>
        <taxon>Idiomarinaceae</taxon>
        <taxon>Idiomarina</taxon>
    </lineage>
</organism>
<comment type="function">
    <text evidence="1">Catalyzes the GTP-dependent ribosomal translocation step during translation elongation. During this step, the ribosome changes from the pre-translocational (PRE) to the post-translocational (POST) state as the newly formed A-site-bound peptidyl-tRNA and P-site-bound deacylated tRNA move to the P and E sites, respectively. Catalyzes the coordinated movement of the two tRNA molecules, the mRNA and conformational changes in the ribosome.</text>
</comment>
<comment type="subcellular location">
    <subcellularLocation>
        <location evidence="1">Cytoplasm</location>
    </subcellularLocation>
</comment>
<comment type="similarity">
    <text evidence="1">Belongs to the TRAFAC class translation factor GTPase superfamily. Classic translation factor GTPase family. EF-G/EF-2 subfamily.</text>
</comment>
<feature type="chain" id="PRO_0000091136" description="Elongation factor G">
    <location>
        <begin position="1"/>
        <end position="707"/>
    </location>
</feature>
<feature type="domain" description="tr-type G">
    <location>
        <begin position="8"/>
        <end position="290"/>
    </location>
</feature>
<feature type="binding site" evidence="1">
    <location>
        <begin position="17"/>
        <end position="24"/>
    </location>
    <ligand>
        <name>GTP</name>
        <dbReference type="ChEBI" id="CHEBI:37565"/>
    </ligand>
</feature>
<feature type="binding site" evidence="1">
    <location>
        <begin position="88"/>
        <end position="92"/>
    </location>
    <ligand>
        <name>GTP</name>
        <dbReference type="ChEBI" id="CHEBI:37565"/>
    </ligand>
</feature>
<feature type="binding site" evidence="1">
    <location>
        <begin position="142"/>
        <end position="145"/>
    </location>
    <ligand>
        <name>GTP</name>
        <dbReference type="ChEBI" id="CHEBI:37565"/>
    </ligand>
</feature>
<sequence>MARKTSIERYRNIGICAHVDAGKTTTTERVLFYTGLSHKIGEVHDGAATMDWMEQEQERGITITSAATTCFWQGMDKQFPEHRVNIIDTPGHVDFTIEVERSLRVLDGAVVVLCASSGVQPQTETVWRQANKYEVPRMVFVNKMDRAGADFLSVVHQMKTRLAAQAVPMQLPVGAEDNFRGVVDLVKMKFINWSEEDMGTSFTYEDIPADMVDECEKYHGELVEAAAEANEELMNKYLEEGELTEAEIKQGLRIRTLANDICLVACGSAFKNKGVQAVLDAVIEYLPSPTEVKPITGILDDESEGVRKSSDEEPFSALAFKIATDPFVGTLTFVRVYSGVLNQGDGVVNPVKNKKERVGRMVQMHSNSREEIKEVRAGDIAALIGLKDVTTGDTLCDPAHKITLERMEFPEPVISVAVEPKTKADQEKMGIALGKLAAEDPSFRVKTDEESGQTIISGMGELHLDIIVDRMKREFKVECNVGQPQVAYREAIRDAVEIEGKFVRQSGGRGQFGHVWLKLEPMTIEEDANGDDITYKFVNEIVGGVVPKEYIPAVDKGIQEQMQQGVLAGYPVLGVKATLYDGSYHDVDSSEMAFKIAGSMAFKKGALKANPALLEPMMKVEVITPEESMGDVVGDLNRRRGLIEGMEEAPGGLKAVNAQVPLSEMFGYATDLRSQTQGRASYSMEFLKYAEAPNNIAEKVMAERNAK</sequence>
<reference key="1">
    <citation type="journal article" date="2004" name="Proc. Natl. Acad. Sci. U.S.A.">
        <title>Genome sequence of the deep-sea gamma-proteobacterium Idiomarina loihiensis reveals amino acid fermentation as a source of carbon and energy.</title>
        <authorList>
            <person name="Hou S."/>
            <person name="Saw J.H."/>
            <person name="Lee K.S."/>
            <person name="Freitas T.A."/>
            <person name="Belisle C."/>
            <person name="Kawarabayasi Y."/>
            <person name="Donachie S.P."/>
            <person name="Pikina A."/>
            <person name="Galperin M.Y."/>
            <person name="Koonin E.V."/>
            <person name="Makarova K.S."/>
            <person name="Omelchenko M.V."/>
            <person name="Sorokin A."/>
            <person name="Wolf Y.I."/>
            <person name="Li Q.X."/>
            <person name="Keum Y.S."/>
            <person name="Campbell S."/>
            <person name="Denery J."/>
            <person name="Aizawa S."/>
            <person name="Shibata S."/>
            <person name="Malahoff A."/>
            <person name="Alam M."/>
        </authorList>
    </citation>
    <scope>NUCLEOTIDE SEQUENCE [LARGE SCALE GENOMIC DNA]</scope>
    <source>
        <strain>ATCC BAA-735 / DSM 15497 / L2-TR</strain>
    </source>
</reference>
<protein>
    <recommendedName>
        <fullName evidence="1">Elongation factor G</fullName>
        <shortName evidence="1">EF-G</shortName>
    </recommendedName>
</protein>
<keyword id="KW-0963">Cytoplasm</keyword>
<keyword id="KW-0251">Elongation factor</keyword>
<keyword id="KW-0342">GTP-binding</keyword>
<keyword id="KW-0547">Nucleotide-binding</keyword>
<keyword id="KW-0648">Protein biosynthesis</keyword>
<keyword id="KW-1185">Reference proteome</keyword>
<proteinExistence type="inferred from homology"/>
<dbReference type="EMBL" id="AE017340">
    <property type="protein sequence ID" value="AAV81192.1"/>
    <property type="molecule type" value="Genomic_DNA"/>
</dbReference>
<dbReference type="RefSeq" id="WP_011233611.1">
    <property type="nucleotide sequence ID" value="NC_006512.1"/>
</dbReference>
<dbReference type="SMR" id="Q5QWB4"/>
<dbReference type="STRING" id="283942.IL0349"/>
<dbReference type="GeneID" id="41335501"/>
<dbReference type="KEGG" id="ilo:IL0349"/>
<dbReference type="eggNOG" id="COG0480">
    <property type="taxonomic scope" value="Bacteria"/>
</dbReference>
<dbReference type="HOGENOM" id="CLU_002794_4_1_6"/>
<dbReference type="OrthoDB" id="9804431at2"/>
<dbReference type="Proteomes" id="UP000001171">
    <property type="component" value="Chromosome"/>
</dbReference>
<dbReference type="GO" id="GO:0005737">
    <property type="term" value="C:cytoplasm"/>
    <property type="evidence" value="ECO:0007669"/>
    <property type="project" value="UniProtKB-SubCell"/>
</dbReference>
<dbReference type="GO" id="GO:0005525">
    <property type="term" value="F:GTP binding"/>
    <property type="evidence" value="ECO:0007669"/>
    <property type="project" value="UniProtKB-UniRule"/>
</dbReference>
<dbReference type="GO" id="GO:0003924">
    <property type="term" value="F:GTPase activity"/>
    <property type="evidence" value="ECO:0007669"/>
    <property type="project" value="InterPro"/>
</dbReference>
<dbReference type="GO" id="GO:0097216">
    <property type="term" value="F:guanosine tetraphosphate binding"/>
    <property type="evidence" value="ECO:0007669"/>
    <property type="project" value="UniProtKB-ARBA"/>
</dbReference>
<dbReference type="GO" id="GO:0003746">
    <property type="term" value="F:translation elongation factor activity"/>
    <property type="evidence" value="ECO:0007669"/>
    <property type="project" value="UniProtKB-UniRule"/>
</dbReference>
<dbReference type="GO" id="GO:0032790">
    <property type="term" value="P:ribosome disassembly"/>
    <property type="evidence" value="ECO:0007669"/>
    <property type="project" value="TreeGrafter"/>
</dbReference>
<dbReference type="CDD" id="cd01886">
    <property type="entry name" value="EF-G"/>
    <property type="match status" value="1"/>
</dbReference>
<dbReference type="CDD" id="cd16262">
    <property type="entry name" value="EFG_III"/>
    <property type="match status" value="1"/>
</dbReference>
<dbReference type="CDD" id="cd01434">
    <property type="entry name" value="EFG_mtEFG1_IV"/>
    <property type="match status" value="1"/>
</dbReference>
<dbReference type="CDD" id="cd03713">
    <property type="entry name" value="EFG_mtEFG_C"/>
    <property type="match status" value="1"/>
</dbReference>
<dbReference type="CDD" id="cd04088">
    <property type="entry name" value="EFG_mtEFG_II"/>
    <property type="match status" value="1"/>
</dbReference>
<dbReference type="FunFam" id="2.40.30.10:FF:000006">
    <property type="entry name" value="Elongation factor G"/>
    <property type="match status" value="1"/>
</dbReference>
<dbReference type="FunFam" id="3.30.230.10:FF:000003">
    <property type="entry name" value="Elongation factor G"/>
    <property type="match status" value="1"/>
</dbReference>
<dbReference type="FunFam" id="3.30.70.240:FF:000001">
    <property type="entry name" value="Elongation factor G"/>
    <property type="match status" value="1"/>
</dbReference>
<dbReference type="FunFam" id="3.30.70.870:FF:000001">
    <property type="entry name" value="Elongation factor G"/>
    <property type="match status" value="1"/>
</dbReference>
<dbReference type="FunFam" id="3.40.50.300:FF:000029">
    <property type="entry name" value="Elongation factor G"/>
    <property type="match status" value="1"/>
</dbReference>
<dbReference type="Gene3D" id="3.30.230.10">
    <property type="match status" value="1"/>
</dbReference>
<dbReference type="Gene3D" id="3.30.70.240">
    <property type="match status" value="1"/>
</dbReference>
<dbReference type="Gene3D" id="3.30.70.870">
    <property type="entry name" value="Elongation Factor G (Translational Gtpase), domain 3"/>
    <property type="match status" value="1"/>
</dbReference>
<dbReference type="Gene3D" id="3.40.50.300">
    <property type="entry name" value="P-loop containing nucleotide triphosphate hydrolases"/>
    <property type="match status" value="1"/>
</dbReference>
<dbReference type="Gene3D" id="2.40.30.10">
    <property type="entry name" value="Translation factors"/>
    <property type="match status" value="1"/>
</dbReference>
<dbReference type="HAMAP" id="MF_00054_B">
    <property type="entry name" value="EF_G_EF_2_B"/>
    <property type="match status" value="1"/>
</dbReference>
<dbReference type="InterPro" id="IPR041095">
    <property type="entry name" value="EFG_II"/>
</dbReference>
<dbReference type="InterPro" id="IPR009022">
    <property type="entry name" value="EFG_III"/>
</dbReference>
<dbReference type="InterPro" id="IPR035647">
    <property type="entry name" value="EFG_III/V"/>
</dbReference>
<dbReference type="InterPro" id="IPR047872">
    <property type="entry name" value="EFG_IV"/>
</dbReference>
<dbReference type="InterPro" id="IPR035649">
    <property type="entry name" value="EFG_V"/>
</dbReference>
<dbReference type="InterPro" id="IPR000640">
    <property type="entry name" value="EFG_V-like"/>
</dbReference>
<dbReference type="InterPro" id="IPR004161">
    <property type="entry name" value="EFTu-like_2"/>
</dbReference>
<dbReference type="InterPro" id="IPR031157">
    <property type="entry name" value="G_TR_CS"/>
</dbReference>
<dbReference type="InterPro" id="IPR027417">
    <property type="entry name" value="P-loop_NTPase"/>
</dbReference>
<dbReference type="InterPro" id="IPR020568">
    <property type="entry name" value="Ribosomal_Su5_D2-typ_SF"/>
</dbReference>
<dbReference type="InterPro" id="IPR014721">
    <property type="entry name" value="Ribsml_uS5_D2-typ_fold_subgr"/>
</dbReference>
<dbReference type="InterPro" id="IPR005225">
    <property type="entry name" value="Small_GTP-bd"/>
</dbReference>
<dbReference type="InterPro" id="IPR000795">
    <property type="entry name" value="T_Tr_GTP-bd_dom"/>
</dbReference>
<dbReference type="InterPro" id="IPR009000">
    <property type="entry name" value="Transl_B-barrel_sf"/>
</dbReference>
<dbReference type="InterPro" id="IPR004540">
    <property type="entry name" value="Transl_elong_EFG/EF2"/>
</dbReference>
<dbReference type="InterPro" id="IPR005517">
    <property type="entry name" value="Transl_elong_EFG/EF2_IV"/>
</dbReference>
<dbReference type="NCBIfam" id="TIGR00484">
    <property type="entry name" value="EF-G"/>
    <property type="match status" value="1"/>
</dbReference>
<dbReference type="NCBIfam" id="NF009381">
    <property type="entry name" value="PRK12740.1-5"/>
    <property type="match status" value="1"/>
</dbReference>
<dbReference type="NCBIfam" id="TIGR00231">
    <property type="entry name" value="small_GTP"/>
    <property type="match status" value="1"/>
</dbReference>
<dbReference type="PANTHER" id="PTHR43261:SF1">
    <property type="entry name" value="RIBOSOME-RELEASING FACTOR 2, MITOCHONDRIAL"/>
    <property type="match status" value="1"/>
</dbReference>
<dbReference type="PANTHER" id="PTHR43261">
    <property type="entry name" value="TRANSLATION ELONGATION FACTOR G-RELATED"/>
    <property type="match status" value="1"/>
</dbReference>
<dbReference type="Pfam" id="PF00679">
    <property type="entry name" value="EFG_C"/>
    <property type="match status" value="1"/>
</dbReference>
<dbReference type="Pfam" id="PF14492">
    <property type="entry name" value="EFG_III"/>
    <property type="match status" value="1"/>
</dbReference>
<dbReference type="Pfam" id="PF03764">
    <property type="entry name" value="EFG_IV"/>
    <property type="match status" value="1"/>
</dbReference>
<dbReference type="Pfam" id="PF00009">
    <property type="entry name" value="GTP_EFTU"/>
    <property type="match status" value="1"/>
</dbReference>
<dbReference type="Pfam" id="PF03144">
    <property type="entry name" value="GTP_EFTU_D2"/>
    <property type="match status" value="1"/>
</dbReference>
<dbReference type="PRINTS" id="PR00315">
    <property type="entry name" value="ELONGATNFCT"/>
</dbReference>
<dbReference type="SMART" id="SM00838">
    <property type="entry name" value="EFG_C"/>
    <property type="match status" value="1"/>
</dbReference>
<dbReference type="SMART" id="SM00889">
    <property type="entry name" value="EFG_IV"/>
    <property type="match status" value="1"/>
</dbReference>
<dbReference type="SUPFAM" id="SSF54980">
    <property type="entry name" value="EF-G C-terminal domain-like"/>
    <property type="match status" value="2"/>
</dbReference>
<dbReference type="SUPFAM" id="SSF52540">
    <property type="entry name" value="P-loop containing nucleoside triphosphate hydrolases"/>
    <property type="match status" value="1"/>
</dbReference>
<dbReference type="SUPFAM" id="SSF54211">
    <property type="entry name" value="Ribosomal protein S5 domain 2-like"/>
    <property type="match status" value="1"/>
</dbReference>
<dbReference type="SUPFAM" id="SSF50447">
    <property type="entry name" value="Translation proteins"/>
    <property type="match status" value="1"/>
</dbReference>
<dbReference type="PROSITE" id="PS00301">
    <property type="entry name" value="G_TR_1"/>
    <property type="match status" value="1"/>
</dbReference>
<dbReference type="PROSITE" id="PS51722">
    <property type="entry name" value="G_TR_2"/>
    <property type="match status" value="1"/>
</dbReference>
<accession>Q5QWB4</accession>
<name>EFG_IDILO</name>